<evidence type="ECO:0000250" key="1"/>
<evidence type="ECO:0000269" key="2">
    <source>
    </source>
</evidence>
<evidence type="ECO:0000305" key="3"/>
<dbReference type="EC" id="2.5.1.18"/>
<dbReference type="EMBL" id="AC004260">
    <property type="protein sequence ID" value="AAC34354.1"/>
    <property type="molecule type" value="Genomic_DNA"/>
</dbReference>
<dbReference type="EMBL" id="CP002684">
    <property type="protein sequence ID" value="AEE35958.1"/>
    <property type="molecule type" value="Genomic_DNA"/>
</dbReference>
<dbReference type="EMBL" id="CP002684">
    <property type="protein sequence ID" value="AEE35959.1"/>
    <property type="molecule type" value="Genomic_DNA"/>
</dbReference>
<dbReference type="EMBL" id="CP002684">
    <property type="protein sequence ID" value="ANM60330.1"/>
    <property type="molecule type" value="Genomic_DNA"/>
</dbReference>
<dbReference type="EMBL" id="AY064034">
    <property type="protein sequence ID" value="AAL36390.1"/>
    <property type="molecule type" value="mRNA"/>
</dbReference>
<dbReference type="EMBL" id="AK317233">
    <property type="protein sequence ID" value="BAH19914.1"/>
    <property type="molecule type" value="mRNA"/>
</dbReference>
<dbReference type="EMBL" id="BT015120">
    <property type="protein sequence ID" value="AAT71992.1"/>
    <property type="molecule type" value="mRNA"/>
</dbReference>
<dbReference type="PIR" id="T00457">
    <property type="entry name" value="T00457"/>
</dbReference>
<dbReference type="RefSeq" id="NP_001031292.1">
    <property type="nucleotide sequence ID" value="NM_001036215.2"/>
</dbReference>
<dbReference type="RefSeq" id="NP_001322626.1">
    <property type="nucleotide sequence ID" value="NM_001334774.1"/>
</dbReference>
<dbReference type="RefSeq" id="NP_177853.1">
    <property type="nucleotide sequence ID" value="NM_106378.3"/>
</dbReference>
<dbReference type="SMR" id="O80662"/>
<dbReference type="FunCoup" id="O80662">
    <property type="interactions" value="614"/>
</dbReference>
<dbReference type="STRING" id="3702.O80662"/>
<dbReference type="iPTMnet" id="O80662"/>
<dbReference type="PaxDb" id="3702-AT1G77290.1"/>
<dbReference type="ProteomicsDB" id="246467"/>
<dbReference type="EnsemblPlants" id="AT1G77290.1">
    <property type="protein sequence ID" value="AT1G77290.1"/>
    <property type="gene ID" value="AT1G77290"/>
</dbReference>
<dbReference type="EnsemblPlants" id="AT1G77290.2">
    <property type="protein sequence ID" value="AT1G77290.2"/>
    <property type="gene ID" value="AT1G77290"/>
</dbReference>
<dbReference type="EnsemblPlants" id="AT1G77290.3">
    <property type="protein sequence ID" value="AT1G77290.3"/>
    <property type="gene ID" value="AT1G77290"/>
</dbReference>
<dbReference type="GeneID" id="844065"/>
<dbReference type="Gramene" id="AT1G77290.1">
    <property type="protein sequence ID" value="AT1G77290.1"/>
    <property type="gene ID" value="AT1G77290"/>
</dbReference>
<dbReference type="Gramene" id="AT1G77290.2">
    <property type="protein sequence ID" value="AT1G77290.2"/>
    <property type="gene ID" value="AT1G77290"/>
</dbReference>
<dbReference type="Gramene" id="AT1G77290.3">
    <property type="protein sequence ID" value="AT1G77290.3"/>
    <property type="gene ID" value="AT1G77290"/>
</dbReference>
<dbReference type="KEGG" id="ath:AT1G77290"/>
<dbReference type="Araport" id="AT1G77290"/>
<dbReference type="TAIR" id="AT1G77290"/>
<dbReference type="eggNOG" id="KOG4420">
    <property type="taxonomic scope" value="Eukaryota"/>
</dbReference>
<dbReference type="HOGENOM" id="CLU_011226_5_3_1"/>
<dbReference type="InParanoid" id="O80662"/>
<dbReference type="OMA" id="LKTWCFV"/>
<dbReference type="OrthoDB" id="418495at2759"/>
<dbReference type="PhylomeDB" id="O80662"/>
<dbReference type="PRO" id="PR:O80662"/>
<dbReference type="Proteomes" id="UP000006548">
    <property type="component" value="Chromosome 1"/>
</dbReference>
<dbReference type="ExpressionAtlas" id="O80662">
    <property type="expression patterns" value="baseline and differential"/>
</dbReference>
<dbReference type="GO" id="GO:0005886">
    <property type="term" value="C:plasma membrane"/>
    <property type="evidence" value="ECO:0007669"/>
    <property type="project" value="UniProtKB-SubCell"/>
</dbReference>
<dbReference type="GO" id="GO:0004364">
    <property type="term" value="F:glutathione transferase activity"/>
    <property type="evidence" value="ECO:0007669"/>
    <property type="project" value="UniProtKB-EC"/>
</dbReference>
<dbReference type="GO" id="GO:0009636">
    <property type="term" value="P:response to toxic substance"/>
    <property type="evidence" value="ECO:0007669"/>
    <property type="project" value="UniProtKB-KW"/>
</dbReference>
<dbReference type="CDD" id="cd00299">
    <property type="entry name" value="GST_C_family"/>
    <property type="match status" value="1"/>
</dbReference>
<dbReference type="CDD" id="cd00570">
    <property type="entry name" value="GST_N_family"/>
    <property type="match status" value="1"/>
</dbReference>
<dbReference type="FunFam" id="1.20.1050.10:FF:000096">
    <property type="entry name" value="TCHQD class glutathione S-transferase"/>
    <property type="match status" value="1"/>
</dbReference>
<dbReference type="FunFam" id="3.40.30.10:FF:000500">
    <property type="entry name" value="TCHQD class glutathione S-transferase"/>
    <property type="match status" value="1"/>
</dbReference>
<dbReference type="Gene3D" id="1.20.1050.10">
    <property type="match status" value="1"/>
</dbReference>
<dbReference type="Gene3D" id="3.40.30.10">
    <property type="entry name" value="Glutaredoxin"/>
    <property type="match status" value="1"/>
</dbReference>
<dbReference type="InterPro" id="IPR010987">
    <property type="entry name" value="Glutathione-S-Trfase_C-like"/>
</dbReference>
<dbReference type="InterPro" id="IPR036282">
    <property type="entry name" value="Glutathione-S-Trfase_C_sf"/>
</dbReference>
<dbReference type="InterPro" id="IPR040079">
    <property type="entry name" value="Glutathione_S-Trfase"/>
</dbReference>
<dbReference type="InterPro" id="IPR004045">
    <property type="entry name" value="Glutathione_S-Trfase_N"/>
</dbReference>
<dbReference type="InterPro" id="IPR044617">
    <property type="entry name" value="TCHQD"/>
</dbReference>
<dbReference type="InterPro" id="IPR036249">
    <property type="entry name" value="Thioredoxin-like_sf"/>
</dbReference>
<dbReference type="PANTHER" id="PTHR45374">
    <property type="entry name" value="GLUTATHIONE S-TRANSFERASE TCHQD"/>
    <property type="match status" value="1"/>
</dbReference>
<dbReference type="PANTHER" id="PTHR45374:SF1">
    <property type="entry name" value="GLUTATHIONE S-TRANSFERASE TCHQD"/>
    <property type="match status" value="1"/>
</dbReference>
<dbReference type="Pfam" id="PF13410">
    <property type="entry name" value="GST_C_2"/>
    <property type="match status" value="1"/>
</dbReference>
<dbReference type="Pfam" id="PF13417">
    <property type="entry name" value="GST_N_3"/>
    <property type="match status" value="1"/>
</dbReference>
<dbReference type="SFLD" id="SFLDS00019">
    <property type="entry name" value="Glutathione_Transferase_(cytos"/>
    <property type="match status" value="1"/>
</dbReference>
<dbReference type="SFLD" id="SFLDG00358">
    <property type="entry name" value="Main_(cytGST)"/>
    <property type="match status" value="1"/>
</dbReference>
<dbReference type="SUPFAM" id="SSF47616">
    <property type="entry name" value="GST C-terminal domain-like"/>
    <property type="match status" value="1"/>
</dbReference>
<dbReference type="SUPFAM" id="SSF52833">
    <property type="entry name" value="Thioredoxin-like"/>
    <property type="match status" value="1"/>
</dbReference>
<dbReference type="PROSITE" id="PS50405">
    <property type="entry name" value="GST_CTER"/>
    <property type="match status" value="1"/>
</dbReference>
<dbReference type="PROSITE" id="PS50404">
    <property type="entry name" value="GST_NTER"/>
    <property type="match status" value="1"/>
</dbReference>
<feature type="chain" id="PRO_0000413580" description="Glutathione S-transferase TCHQD">
    <location>
        <begin position="1"/>
        <end position="266"/>
    </location>
</feature>
<feature type="domain" description="GST N-terminal">
    <location>
        <begin position="1"/>
        <end position="80"/>
    </location>
</feature>
<feature type="domain" description="GST C-terminal">
    <location>
        <begin position="120"/>
        <end position="250"/>
    </location>
</feature>
<feature type="binding site" evidence="1">
    <location>
        <begin position="9"/>
        <end position="10"/>
    </location>
    <ligand>
        <name>glutathione</name>
        <dbReference type="ChEBI" id="CHEBI:57925"/>
    </ligand>
</feature>
<feature type="binding site" evidence="1">
    <location>
        <begin position="38"/>
        <end position="39"/>
    </location>
    <ligand>
        <name>glutathione</name>
        <dbReference type="ChEBI" id="CHEBI:57925"/>
    </ligand>
</feature>
<feature type="binding site" evidence="1">
    <location>
        <begin position="51"/>
        <end position="52"/>
    </location>
    <ligand>
        <name>glutathione</name>
        <dbReference type="ChEBI" id="CHEBI:57925"/>
    </ligand>
</feature>
<feature type="binding site" evidence="1">
    <location>
        <begin position="64"/>
        <end position="65"/>
    </location>
    <ligand>
        <name>glutathione</name>
        <dbReference type="ChEBI" id="CHEBI:57925"/>
    </ligand>
</feature>
<reference key="1">
    <citation type="journal article" date="2000" name="Nature">
        <title>Sequence and analysis of chromosome 1 of the plant Arabidopsis thaliana.</title>
        <authorList>
            <person name="Theologis A."/>
            <person name="Ecker J.R."/>
            <person name="Palm C.J."/>
            <person name="Federspiel N.A."/>
            <person name="Kaul S."/>
            <person name="White O."/>
            <person name="Alonso J."/>
            <person name="Altafi H."/>
            <person name="Araujo R."/>
            <person name="Bowman C.L."/>
            <person name="Brooks S.Y."/>
            <person name="Buehler E."/>
            <person name="Chan A."/>
            <person name="Chao Q."/>
            <person name="Chen H."/>
            <person name="Cheuk R.F."/>
            <person name="Chin C.W."/>
            <person name="Chung M.K."/>
            <person name="Conn L."/>
            <person name="Conway A.B."/>
            <person name="Conway A.R."/>
            <person name="Creasy T.H."/>
            <person name="Dewar K."/>
            <person name="Dunn P."/>
            <person name="Etgu P."/>
            <person name="Feldblyum T.V."/>
            <person name="Feng J.-D."/>
            <person name="Fong B."/>
            <person name="Fujii C.Y."/>
            <person name="Gill J.E."/>
            <person name="Goldsmith A.D."/>
            <person name="Haas B."/>
            <person name="Hansen N.F."/>
            <person name="Hughes B."/>
            <person name="Huizar L."/>
            <person name="Hunter J.L."/>
            <person name="Jenkins J."/>
            <person name="Johnson-Hopson C."/>
            <person name="Khan S."/>
            <person name="Khaykin E."/>
            <person name="Kim C.J."/>
            <person name="Koo H.L."/>
            <person name="Kremenetskaia I."/>
            <person name="Kurtz D.B."/>
            <person name="Kwan A."/>
            <person name="Lam B."/>
            <person name="Langin-Hooper S."/>
            <person name="Lee A."/>
            <person name="Lee J.M."/>
            <person name="Lenz C.A."/>
            <person name="Li J.H."/>
            <person name="Li Y.-P."/>
            <person name="Lin X."/>
            <person name="Liu S.X."/>
            <person name="Liu Z.A."/>
            <person name="Luros J.S."/>
            <person name="Maiti R."/>
            <person name="Marziali A."/>
            <person name="Militscher J."/>
            <person name="Miranda M."/>
            <person name="Nguyen M."/>
            <person name="Nierman W.C."/>
            <person name="Osborne B.I."/>
            <person name="Pai G."/>
            <person name="Peterson J."/>
            <person name="Pham P.K."/>
            <person name="Rizzo M."/>
            <person name="Rooney T."/>
            <person name="Rowley D."/>
            <person name="Sakano H."/>
            <person name="Salzberg S.L."/>
            <person name="Schwartz J.R."/>
            <person name="Shinn P."/>
            <person name="Southwick A.M."/>
            <person name="Sun H."/>
            <person name="Tallon L.J."/>
            <person name="Tambunga G."/>
            <person name="Toriumi M.J."/>
            <person name="Town C.D."/>
            <person name="Utterback T."/>
            <person name="Van Aken S."/>
            <person name="Vaysberg M."/>
            <person name="Vysotskaia V.S."/>
            <person name="Walker M."/>
            <person name="Wu D."/>
            <person name="Yu G."/>
            <person name="Fraser C.M."/>
            <person name="Venter J.C."/>
            <person name="Davis R.W."/>
        </authorList>
    </citation>
    <scope>NUCLEOTIDE SEQUENCE [LARGE SCALE GENOMIC DNA]</scope>
    <source>
        <strain>cv. Columbia</strain>
        <tissue>Rosette leaf</tissue>
    </source>
</reference>
<reference key="2">
    <citation type="journal article" date="2017" name="Plant J.">
        <title>Araport11: a complete reannotation of the Arabidopsis thaliana reference genome.</title>
        <authorList>
            <person name="Cheng C.Y."/>
            <person name="Krishnakumar V."/>
            <person name="Chan A.P."/>
            <person name="Thibaud-Nissen F."/>
            <person name="Schobel S."/>
            <person name="Town C.D."/>
        </authorList>
    </citation>
    <scope>GENOME REANNOTATION</scope>
    <source>
        <strain>cv. Columbia</strain>
    </source>
</reference>
<reference key="3">
    <citation type="journal article" date="2003" name="Science">
        <title>Empirical analysis of transcriptional activity in the Arabidopsis genome.</title>
        <authorList>
            <person name="Yamada K."/>
            <person name="Lim J."/>
            <person name="Dale J.M."/>
            <person name="Chen H."/>
            <person name="Shinn P."/>
            <person name="Palm C.J."/>
            <person name="Southwick A.M."/>
            <person name="Wu H.C."/>
            <person name="Kim C.J."/>
            <person name="Nguyen M."/>
            <person name="Pham P.K."/>
            <person name="Cheuk R.F."/>
            <person name="Karlin-Newmann G."/>
            <person name="Liu S.X."/>
            <person name="Lam B."/>
            <person name="Sakano H."/>
            <person name="Wu T."/>
            <person name="Yu G."/>
            <person name="Miranda M."/>
            <person name="Quach H.L."/>
            <person name="Tripp M."/>
            <person name="Chang C.H."/>
            <person name="Lee J.M."/>
            <person name="Toriumi M.J."/>
            <person name="Chan M.M."/>
            <person name="Tang C.C."/>
            <person name="Onodera C.S."/>
            <person name="Deng J.M."/>
            <person name="Akiyama K."/>
            <person name="Ansari Y."/>
            <person name="Arakawa T."/>
            <person name="Banh J."/>
            <person name="Banno F."/>
            <person name="Bowser L."/>
            <person name="Brooks S.Y."/>
            <person name="Carninci P."/>
            <person name="Chao Q."/>
            <person name="Choy N."/>
            <person name="Enju A."/>
            <person name="Goldsmith A.D."/>
            <person name="Gurjal M."/>
            <person name="Hansen N.F."/>
            <person name="Hayashizaki Y."/>
            <person name="Johnson-Hopson C."/>
            <person name="Hsuan V.W."/>
            <person name="Iida K."/>
            <person name="Karnes M."/>
            <person name="Khan S."/>
            <person name="Koesema E."/>
            <person name="Ishida J."/>
            <person name="Jiang P.X."/>
            <person name="Jones T."/>
            <person name="Kawai J."/>
            <person name="Kamiya A."/>
            <person name="Meyers C."/>
            <person name="Nakajima M."/>
            <person name="Narusaka M."/>
            <person name="Seki M."/>
            <person name="Sakurai T."/>
            <person name="Satou M."/>
            <person name="Tamse R."/>
            <person name="Vaysberg M."/>
            <person name="Wallender E.K."/>
            <person name="Wong C."/>
            <person name="Yamamura Y."/>
            <person name="Yuan S."/>
            <person name="Shinozaki K."/>
            <person name="Davis R.W."/>
            <person name="Theologis A."/>
            <person name="Ecker J.R."/>
        </authorList>
    </citation>
    <scope>NUCLEOTIDE SEQUENCE [LARGE SCALE MRNA]</scope>
    <source>
        <strain>cv. Columbia</strain>
    </source>
</reference>
<reference key="4">
    <citation type="journal article" date="2009" name="DNA Res.">
        <title>Analysis of multiple occurrences of alternative splicing events in Arabidopsis thaliana using novel sequenced full-length cDNAs.</title>
        <authorList>
            <person name="Iida K."/>
            <person name="Fukami-Kobayashi K."/>
            <person name="Toyoda A."/>
            <person name="Sakaki Y."/>
            <person name="Kobayashi M."/>
            <person name="Seki M."/>
            <person name="Shinozaki K."/>
        </authorList>
    </citation>
    <scope>NUCLEOTIDE SEQUENCE [LARGE SCALE MRNA]</scope>
    <source>
        <strain>cv. Columbia</strain>
    </source>
</reference>
<reference key="5">
    <citation type="submission" date="2004-07" db="EMBL/GenBank/DDBJ databases">
        <title>Arabidopsis ORF clones.</title>
        <authorList>
            <person name="Cheuk R.F."/>
            <person name="Chen H."/>
            <person name="Kim C.J."/>
            <person name="Shinn P."/>
            <person name="Ecker J.R."/>
        </authorList>
    </citation>
    <scope>NUCLEOTIDE SEQUENCE [LARGE SCALE MRNA]</scope>
    <source>
        <strain>cv. Columbia</strain>
    </source>
</reference>
<reference key="6">
    <citation type="journal article" date="2009" name="J. Exp. Bot.">
        <title>Enzyme activities and subcellular localization of members of the Arabidopsis glutathione transferase superfamily.</title>
        <authorList>
            <person name="Dixon D.P."/>
            <person name="Hawkins T."/>
            <person name="Hussey P.J."/>
            <person name="Edwards R."/>
        </authorList>
    </citation>
    <scope>SUBCELLULAR LOCATION</scope>
</reference>
<protein>
    <recommendedName>
        <fullName>Glutathione S-transferase TCHQD</fullName>
        <ecNumber>2.5.1.18</ecNumber>
    </recommendedName>
    <alternativeName>
        <fullName>Protein tetrachlorohydroquinone dehalogenase-homolog</fullName>
    </alternativeName>
</protein>
<sequence length="266" mass="31506">MQLYHHPYSIDSQRVRLALEEKGIDYTSYHVNPITGKHMDPSFFRMNPNAKLPVFRNGSHIILDTIEIIEYLERIAEVSSGIEDATFNREVVEWMRKIREWESKLFTLAHIPDNRRLYVSKFLRMVVIARMAESPDLASAYHRKLREAYDTEDKLKDPGALRRSKDHLLRLLDEVETKLEGTTYLAGNEFSMADVMLIPVLARLSLLDLEEEYISSRKNLAEYWALVRRRPSYKKVIGRYFNGWRKYATLVKTWMFVRVRSLLRKY</sequence>
<name>TCHQD_ARATH</name>
<comment type="function">
    <text evidence="1">May be involved in the conjugation of reduced glutathione to a wide number of exogenous and endogenous hydrophobic electrophiles.</text>
</comment>
<comment type="catalytic activity">
    <reaction>
        <text>RX + glutathione = an S-substituted glutathione + a halide anion + H(+)</text>
        <dbReference type="Rhea" id="RHEA:16437"/>
        <dbReference type="ChEBI" id="CHEBI:15378"/>
        <dbReference type="ChEBI" id="CHEBI:16042"/>
        <dbReference type="ChEBI" id="CHEBI:17792"/>
        <dbReference type="ChEBI" id="CHEBI:57925"/>
        <dbReference type="ChEBI" id="CHEBI:90779"/>
        <dbReference type="EC" id="2.5.1.18"/>
    </reaction>
</comment>
<comment type="subcellular location">
    <subcellularLocation>
        <location evidence="2">Cell membrane</location>
    </subcellularLocation>
</comment>
<comment type="similarity">
    <text evidence="3">Belongs to the GST superfamily.</text>
</comment>
<keyword id="KW-1003">Cell membrane</keyword>
<keyword id="KW-0216">Detoxification</keyword>
<keyword id="KW-0472">Membrane</keyword>
<keyword id="KW-1185">Reference proteome</keyword>
<keyword id="KW-0808">Transferase</keyword>
<organism>
    <name type="scientific">Arabidopsis thaliana</name>
    <name type="common">Mouse-ear cress</name>
    <dbReference type="NCBI Taxonomy" id="3702"/>
    <lineage>
        <taxon>Eukaryota</taxon>
        <taxon>Viridiplantae</taxon>
        <taxon>Streptophyta</taxon>
        <taxon>Embryophyta</taxon>
        <taxon>Tracheophyta</taxon>
        <taxon>Spermatophyta</taxon>
        <taxon>Magnoliopsida</taxon>
        <taxon>eudicotyledons</taxon>
        <taxon>Gunneridae</taxon>
        <taxon>Pentapetalae</taxon>
        <taxon>rosids</taxon>
        <taxon>malvids</taxon>
        <taxon>Brassicales</taxon>
        <taxon>Brassicaceae</taxon>
        <taxon>Camelineae</taxon>
        <taxon>Arabidopsis</taxon>
    </lineage>
</organism>
<accession>O80662</accession>
<proteinExistence type="evidence at transcript level"/>
<gene>
    <name type="primary">TCHQD</name>
    <name type="ordered locus">At1g77290</name>
    <name type="ORF">T14N5.14</name>
</gene>